<reference key="1">
    <citation type="journal article" date="2007" name="Nat. Biotechnol.">
        <title>Comparative analysis of the complete genome sequence of the plant growth-promoting bacterium Bacillus amyloliquefaciens FZB42.</title>
        <authorList>
            <person name="Chen X.H."/>
            <person name="Koumoutsi A."/>
            <person name="Scholz R."/>
            <person name="Eisenreich A."/>
            <person name="Schneider K."/>
            <person name="Heinemeyer I."/>
            <person name="Morgenstern B."/>
            <person name="Voss B."/>
            <person name="Hess W.R."/>
            <person name="Reva O."/>
            <person name="Junge H."/>
            <person name="Voigt B."/>
            <person name="Jungblut P.R."/>
            <person name="Vater J."/>
            <person name="Suessmuth R."/>
            <person name="Liesegang H."/>
            <person name="Strittmatter A."/>
            <person name="Gottschalk G."/>
            <person name="Borriss R."/>
        </authorList>
    </citation>
    <scope>NUCLEOTIDE SEQUENCE [LARGE SCALE GENOMIC DNA]</scope>
    <source>
        <strain>DSM 23117 / BGSC 10A6 / LMG 26770 / FZB42</strain>
    </source>
</reference>
<proteinExistence type="inferred from homology"/>
<keyword id="KW-0067">ATP-binding</keyword>
<keyword id="KW-0436">Ligase</keyword>
<keyword id="KW-0547">Nucleotide-binding</keyword>
<keyword id="KW-0648">Protein biosynthesis</keyword>
<gene>
    <name evidence="1" type="primary">gatA</name>
    <name type="ordered locus">RBAM_007080</name>
</gene>
<name>GATA_BACVZ</name>
<feature type="chain" id="PRO_1000015798" description="Glutamyl-tRNA(Gln) amidotransferase subunit A">
    <location>
        <begin position="1"/>
        <end position="485"/>
    </location>
</feature>
<feature type="active site" description="Charge relay system" evidence="1">
    <location>
        <position position="79"/>
    </location>
</feature>
<feature type="active site" description="Charge relay system" evidence="1">
    <location>
        <position position="154"/>
    </location>
</feature>
<feature type="active site" description="Acyl-ester intermediate" evidence="1">
    <location>
        <position position="178"/>
    </location>
</feature>
<protein>
    <recommendedName>
        <fullName evidence="1">Glutamyl-tRNA(Gln) amidotransferase subunit A</fullName>
        <shortName evidence="1">Glu-ADT subunit A</shortName>
        <ecNumber evidence="1">6.3.5.7</ecNumber>
    </recommendedName>
</protein>
<organism>
    <name type="scientific">Bacillus velezensis (strain DSM 23117 / BGSC 10A6 / LMG 26770 / FZB42)</name>
    <name type="common">Bacillus amyloliquefaciens subsp. plantarum</name>
    <dbReference type="NCBI Taxonomy" id="326423"/>
    <lineage>
        <taxon>Bacteria</taxon>
        <taxon>Bacillati</taxon>
        <taxon>Bacillota</taxon>
        <taxon>Bacilli</taxon>
        <taxon>Bacillales</taxon>
        <taxon>Bacillaceae</taxon>
        <taxon>Bacillus</taxon>
        <taxon>Bacillus amyloliquefaciens group</taxon>
    </lineage>
</organism>
<dbReference type="EC" id="6.3.5.7" evidence="1"/>
<dbReference type="EMBL" id="CP000560">
    <property type="protein sequence ID" value="ABS73093.1"/>
    <property type="molecule type" value="Genomic_DNA"/>
</dbReference>
<dbReference type="RefSeq" id="WP_007408915.1">
    <property type="nucleotide sequence ID" value="NC_009725.2"/>
</dbReference>
<dbReference type="SMR" id="A7Z267"/>
<dbReference type="GeneID" id="93079843"/>
<dbReference type="KEGG" id="bay:RBAM_007080"/>
<dbReference type="HOGENOM" id="CLU_009600_0_3_9"/>
<dbReference type="Proteomes" id="UP000001120">
    <property type="component" value="Chromosome"/>
</dbReference>
<dbReference type="GO" id="GO:0030956">
    <property type="term" value="C:glutamyl-tRNA(Gln) amidotransferase complex"/>
    <property type="evidence" value="ECO:0007669"/>
    <property type="project" value="InterPro"/>
</dbReference>
<dbReference type="GO" id="GO:0005524">
    <property type="term" value="F:ATP binding"/>
    <property type="evidence" value="ECO:0007669"/>
    <property type="project" value="UniProtKB-KW"/>
</dbReference>
<dbReference type="GO" id="GO:0050567">
    <property type="term" value="F:glutaminyl-tRNA synthase (glutamine-hydrolyzing) activity"/>
    <property type="evidence" value="ECO:0007669"/>
    <property type="project" value="UniProtKB-UniRule"/>
</dbReference>
<dbReference type="GO" id="GO:0006412">
    <property type="term" value="P:translation"/>
    <property type="evidence" value="ECO:0007669"/>
    <property type="project" value="UniProtKB-UniRule"/>
</dbReference>
<dbReference type="Gene3D" id="3.90.1300.10">
    <property type="entry name" value="Amidase signature (AS) domain"/>
    <property type="match status" value="1"/>
</dbReference>
<dbReference type="HAMAP" id="MF_00120">
    <property type="entry name" value="GatA"/>
    <property type="match status" value="1"/>
</dbReference>
<dbReference type="InterPro" id="IPR000120">
    <property type="entry name" value="Amidase"/>
</dbReference>
<dbReference type="InterPro" id="IPR020556">
    <property type="entry name" value="Amidase_CS"/>
</dbReference>
<dbReference type="InterPro" id="IPR023631">
    <property type="entry name" value="Amidase_dom"/>
</dbReference>
<dbReference type="InterPro" id="IPR036928">
    <property type="entry name" value="AS_sf"/>
</dbReference>
<dbReference type="InterPro" id="IPR004412">
    <property type="entry name" value="GatA"/>
</dbReference>
<dbReference type="NCBIfam" id="TIGR00132">
    <property type="entry name" value="gatA"/>
    <property type="match status" value="1"/>
</dbReference>
<dbReference type="PANTHER" id="PTHR11895:SF151">
    <property type="entry name" value="GLUTAMYL-TRNA(GLN) AMIDOTRANSFERASE SUBUNIT A"/>
    <property type="match status" value="1"/>
</dbReference>
<dbReference type="PANTHER" id="PTHR11895">
    <property type="entry name" value="TRANSAMIDASE"/>
    <property type="match status" value="1"/>
</dbReference>
<dbReference type="Pfam" id="PF01425">
    <property type="entry name" value="Amidase"/>
    <property type="match status" value="1"/>
</dbReference>
<dbReference type="SUPFAM" id="SSF75304">
    <property type="entry name" value="Amidase signature (AS) enzymes"/>
    <property type="match status" value="1"/>
</dbReference>
<dbReference type="PROSITE" id="PS00571">
    <property type="entry name" value="AMIDASES"/>
    <property type="match status" value="1"/>
</dbReference>
<comment type="function">
    <text evidence="1">Allows the formation of correctly charged Gln-tRNA(Gln) through the transamidation of misacylated Glu-tRNA(Gln) in organisms which lack glutaminyl-tRNA synthetase. The reaction takes place in the presence of glutamine and ATP through an activated gamma-phospho-Glu-tRNA(Gln).</text>
</comment>
<comment type="catalytic activity">
    <reaction evidence="1">
        <text>L-glutamyl-tRNA(Gln) + L-glutamine + ATP + H2O = L-glutaminyl-tRNA(Gln) + L-glutamate + ADP + phosphate + H(+)</text>
        <dbReference type="Rhea" id="RHEA:17521"/>
        <dbReference type="Rhea" id="RHEA-COMP:9681"/>
        <dbReference type="Rhea" id="RHEA-COMP:9684"/>
        <dbReference type="ChEBI" id="CHEBI:15377"/>
        <dbReference type="ChEBI" id="CHEBI:15378"/>
        <dbReference type="ChEBI" id="CHEBI:29985"/>
        <dbReference type="ChEBI" id="CHEBI:30616"/>
        <dbReference type="ChEBI" id="CHEBI:43474"/>
        <dbReference type="ChEBI" id="CHEBI:58359"/>
        <dbReference type="ChEBI" id="CHEBI:78520"/>
        <dbReference type="ChEBI" id="CHEBI:78521"/>
        <dbReference type="ChEBI" id="CHEBI:456216"/>
        <dbReference type="EC" id="6.3.5.7"/>
    </reaction>
</comment>
<comment type="subunit">
    <text evidence="1">Heterotrimer of A, B and C subunits.</text>
</comment>
<comment type="similarity">
    <text evidence="1">Belongs to the amidase family. GatA subfamily.</text>
</comment>
<accession>A7Z267</accession>
<sequence>MSLFDHKITELKQMIHKKEIKISDLVDESYKRIASVDDKVQAFLQLDEERARAYAKELDEAVDGRSEHGLLFGMPIGVKDNIVTKGLRTTCSSKILENFDPIYDATVVERLQAAEAVTIGKLNMDEFAMGSSTENSAYKATKNPWNLDTVPGGSSGGSAAAVAAGEVPFSLGSDTGGSIRQPASFCGVVGLKPTYGRVSRYGLVAFASSLDQIGPITRTVEDNAFLLQAISGPDKMDSTSANVEVPDFLSSLTGDIKGLKIAVPKEYLGEGVGKEAKESVLAALKVLEDLGATWEEVSLPHSKYALATYYLLSSSEASANLARFDGIRYGYRSDNADNLIDLYKQTRSEGFGNEVKRRIMLGTFALSSGYYDAYYKKAQKVRTLIKKDFEDVFEKYDVIVGPTTPTPAFKIGEKTSDPLTMYANDILTIPVNLAGVPGISVPCGFADGLPLGLQIIGKHFDEGTVYRVAHAFEQATDHHKAKPEL</sequence>
<evidence type="ECO:0000255" key="1">
    <source>
        <dbReference type="HAMAP-Rule" id="MF_00120"/>
    </source>
</evidence>